<name>SYDP_SALA4</name>
<keyword id="KW-0997">Cell inner membrane</keyword>
<keyword id="KW-1003">Cell membrane</keyword>
<keyword id="KW-0472">Membrane</keyword>
<dbReference type="EMBL" id="CP001138">
    <property type="protein sequence ID" value="ACH51774.1"/>
    <property type="molecule type" value="Genomic_DNA"/>
</dbReference>
<dbReference type="RefSeq" id="WP_000343990.1">
    <property type="nucleotide sequence ID" value="NC_011149.1"/>
</dbReference>
<dbReference type="SMR" id="B5F4R1"/>
<dbReference type="KEGG" id="sea:SeAg_B3109"/>
<dbReference type="HOGENOM" id="CLU_121866_0_0_6"/>
<dbReference type="Proteomes" id="UP000008819">
    <property type="component" value="Chromosome"/>
</dbReference>
<dbReference type="GO" id="GO:0009898">
    <property type="term" value="C:cytoplasmic side of plasma membrane"/>
    <property type="evidence" value="ECO:0007669"/>
    <property type="project" value="InterPro"/>
</dbReference>
<dbReference type="CDD" id="cd16323">
    <property type="entry name" value="Syd"/>
    <property type="match status" value="1"/>
</dbReference>
<dbReference type="Gene3D" id="3.40.1580.20">
    <property type="entry name" value="Syd protein"/>
    <property type="match status" value="1"/>
</dbReference>
<dbReference type="HAMAP" id="MF_01104">
    <property type="entry name" value="Syd"/>
    <property type="match status" value="1"/>
</dbReference>
<dbReference type="InterPro" id="IPR009948">
    <property type="entry name" value="Syd"/>
</dbReference>
<dbReference type="InterPro" id="IPR038228">
    <property type="entry name" value="Syd_sf"/>
</dbReference>
<dbReference type="NCBIfam" id="NF003439">
    <property type="entry name" value="PRK04968.1"/>
    <property type="match status" value="1"/>
</dbReference>
<dbReference type="Pfam" id="PF07348">
    <property type="entry name" value="Syd"/>
    <property type="match status" value="1"/>
</dbReference>
<feature type="chain" id="PRO_1000137035" description="Protein Syd">
    <location>
        <begin position="1"/>
        <end position="181"/>
    </location>
</feature>
<gene>
    <name evidence="1" type="primary">syd</name>
    <name type="ordered locus">SeAg_B3109</name>
</gene>
<evidence type="ECO:0000255" key="1">
    <source>
        <dbReference type="HAMAP-Rule" id="MF_01104"/>
    </source>
</evidence>
<reference key="1">
    <citation type="journal article" date="2011" name="J. Bacteriol.">
        <title>Comparative genomics of 28 Salmonella enterica isolates: evidence for CRISPR-mediated adaptive sublineage evolution.</title>
        <authorList>
            <person name="Fricke W.F."/>
            <person name="Mammel M.K."/>
            <person name="McDermott P.F."/>
            <person name="Tartera C."/>
            <person name="White D.G."/>
            <person name="Leclerc J.E."/>
            <person name="Ravel J."/>
            <person name="Cebula T.A."/>
        </authorList>
    </citation>
    <scope>NUCLEOTIDE SEQUENCE [LARGE SCALE GENOMIC DNA]</scope>
    <source>
        <strain>SL483</strain>
    </source>
</reference>
<accession>B5F4R1</accession>
<sequence length="181" mass="20518">MDELTAQALKAFTTRYCDAWQEKHGSWPLSEELYGVPSPCIISSTRDAVYWQPQPFEGEENVNAVERAFDIMVQPALHAFYTTQFAGDMPAQFADEKLTLLQTWSQDDFRRVQENLIGHLVTQKRLKLPPTLFIATQENELEVISVCNLSGEVIKETLGTRNRTVLAATLAEFLTQLNPLL</sequence>
<comment type="function">
    <text evidence="1">Interacts with the SecY protein in vivo. May bind preferentially to an uncomplexed state of SecY, thus functioning either as a chelating agent for excess SecY in the cell or as a regulatory factor that negatively controls the translocase function.</text>
</comment>
<comment type="subcellular location">
    <subcellularLocation>
        <location evidence="1">Cell inner membrane</location>
        <topology evidence="1">Peripheral membrane protein</topology>
        <orientation evidence="1">Cytoplasmic side</orientation>
    </subcellularLocation>
    <text evidence="1">Loosely associated with the cytoplasmic side of the inner membrane, probably via SecY.</text>
</comment>
<comment type="similarity">
    <text evidence="1">Belongs to the Syd family.</text>
</comment>
<proteinExistence type="inferred from homology"/>
<protein>
    <recommendedName>
        <fullName evidence="1">Protein Syd</fullName>
    </recommendedName>
</protein>
<organism>
    <name type="scientific">Salmonella agona (strain SL483)</name>
    <dbReference type="NCBI Taxonomy" id="454166"/>
    <lineage>
        <taxon>Bacteria</taxon>
        <taxon>Pseudomonadati</taxon>
        <taxon>Pseudomonadota</taxon>
        <taxon>Gammaproteobacteria</taxon>
        <taxon>Enterobacterales</taxon>
        <taxon>Enterobacteriaceae</taxon>
        <taxon>Salmonella</taxon>
    </lineage>
</organism>